<proteinExistence type="evidence at protein level"/>
<accession>P29707</accession>
<reference key="1">
    <citation type="journal article" date="1988" name="FEMS Microbiol. Lett.">
        <title>Cloning and sequencing of the gene encoding the beta subunit of the sodium ion translocating ATP synthase of Propionigenium modestum.</title>
        <authorList>
            <person name="Amann R."/>
            <person name="Ludwig W."/>
            <person name="Laubinger W."/>
            <person name="Dimroth P."/>
            <person name="Schleifer K.H."/>
        </authorList>
    </citation>
    <scope>NUCLEOTIDE SEQUENCE [GENOMIC DNA]</scope>
    <source>
        <strain>DSM 2376 / Gra Succ2</strain>
    </source>
</reference>
<reference key="2">
    <citation type="journal article" date="1995" name="Eur. J. Biochem.">
        <title>In vivo synthesis of ATPase complexes of Propionigenium modestum and Escherichia coli and analysis of their function.</title>
        <authorList>
            <person name="Gerike U."/>
            <person name="Kaim G.W."/>
            <person name="Dimroth P."/>
        </authorList>
    </citation>
    <scope>SEQUENCE REVISION</scope>
</reference>
<reference key="3">
    <citation type="journal article" date="1993" name="FEBS Lett.">
        <title>N-terminal amino acid sequences of the subunits of the Na(+)-translocating F1F0 ATPase from Propionigenium modestum.</title>
        <authorList>
            <person name="Gerike U."/>
            <person name="Dimroth P."/>
        </authorList>
    </citation>
    <scope>PROTEIN SEQUENCE OF 1-7</scope>
</reference>
<protein>
    <recommendedName>
        <fullName>ATP synthase subunit beta, sodium ion specific</fullName>
        <ecNumber>7.2.2.1</ecNumber>
    </recommendedName>
    <alternativeName>
        <fullName>Na(+)-translocating ATPase subunit beta</fullName>
    </alternativeName>
</protein>
<comment type="function">
    <text>Produces ATP from ADP in the presence of a sodium ion gradient across the membrane. The beta chain is the catalytic subunit.</text>
</comment>
<comment type="catalytic activity">
    <reaction>
        <text>4 Na(+)(in) + ATP + H2O = 4 Na(+)(out) + ADP + phosphate + H(+)</text>
        <dbReference type="Rhea" id="RHEA:58156"/>
        <dbReference type="ChEBI" id="CHEBI:15377"/>
        <dbReference type="ChEBI" id="CHEBI:15378"/>
        <dbReference type="ChEBI" id="CHEBI:29101"/>
        <dbReference type="ChEBI" id="CHEBI:30616"/>
        <dbReference type="ChEBI" id="CHEBI:43474"/>
        <dbReference type="ChEBI" id="CHEBI:456216"/>
        <dbReference type="EC" id="7.2.2.1"/>
    </reaction>
</comment>
<comment type="subunit">
    <text>F-type ATPases have 2 components, CF(1) - the catalytic core - and CF(0) - the membrane proton channel. CF(1) has five subunits: alpha(3), beta(3), gamma(1), delta(1), epsilon(1). CF(0) has three main subunits: a, b and c.</text>
</comment>
<comment type="subcellular location">
    <subcellularLocation>
        <location evidence="1">Cell membrane</location>
        <topology evidence="1">Peripheral membrane protein</topology>
    </subcellularLocation>
</comment>
<comment type="miscellaneous">
    <text>The ATPase of P.modestum is of special interest because it uses sodium ions instead of protons as the physiological coupling ion.</text>
</comment>
<comment type="similarity">
    <text evidence="1">Belongs to the ATPase alpha/beta chains family.</text>
</comment>
<name>ATPB_PROMO</name>
<keyword id="KW-0066">ATP synthesis</keyword>
<keyword id="KW-0067">ATP-binding</keyword>
<keyword id="KW-1003">Cell membrane</keyword>
<keyword id="KW-0139">CF(1)</keyword>
<keyword id="KW-0903">Direct protein sequencing</keyword>
<keyword id="KW-0406">Ion transport</keyword>
<keyword id="KW-0472">Membrane</keyword>
<keyword id="KW-0547">Nucleotide-binding</keyword>
<keyword id="KW-0915">Sodium</keyword>
<keyword id="KW-0739">Sodium transport</keyword>
<keyword id="KW-1278">Translocase</keyword>
<keyword id="KW-0813">Transport</keyword>
<sequence>MENKGVITQIIGPVVDVTFENELPRIYNALKIDRGNGEYLVAEVQQHLGNSVVRAVAMDATDGLQRGMEVVDTGPAITVPVGKAVLGRILNVLGEPVDEAGEVKAEEYAPIHREAPAFEDQGTEKEVFETGIKVVDLLAPYVKGGKIGLFGGAGVGKTVLIMELINNIAQGHGGLSVFAGVGERTREGRDLYDEMLESGVLDKTSLVYGQMNEPPGARLRVGLTGLTMAENFRDKEGQDVLFFVDNIFRFTQAPSEVSALLGRMPSAVGYQPNLATDMGALQERITSTKTGSITSVQAVYVPADDLTDPAPATTFTHLDATTVLSRRIASLGIYPAVDPLDSTSTALEPQIIGHEHYNTAREVQQILQRYKELQDIIAILGMDELSDEDKVTVNRARKIERFFSQPFHVAEQFTGMDGKYVTVKETIRGFKEIIEGKHDDLPEQAFLYVGTIDEAIAKARELMKGAE</sequence>
<feature type="chain" id="PRO_0000144461" description="ATP synthase subunit beta, sodium ion specific">
    <location>
        <begin position="1"/>
        <end position="467"/>
    </location>
</feature>
<feature type="binding site" evidence="1">
    <location>
        <begin position="151"/>
        <end position="158"/>
    </location>
    <ligand>
        <name>ATP</name>
        <dbReference type="ChEBI" id="CHEBI:30616"/>
    </ligand>
</feature>
<evidence type="ECO:0000255" key="1">
    <source>
        <dbReference type="HAMAP-Rule" id="MF_01347"/>
    </source>
</evidence>
<dbReference type="EC" id="7.2.2.1"/>
<dbReference type="EMBL" id="X58461">
    <property type="protein sequence ID" value="CAA41374.1"/>
    <property type="molecule type" value="Genomic_DNA"/>
</dbReference>
<dbReference type="PIR" id="S66664">
    <property type="entry name" value="S66664"/>
</dbReference>
<dbReference type="SMR" id="P29707"/>
<dbReference type="TCDB" id="3.A.2.1.2">
    <property type="family name" value="the h+- or na+-translocating f-type, v-type and a-type atpase (f-atpase) superfamily"/>
</dbReference>
<dbReference type="GO" id="GO:0005886">
    <property type="term" value="C:plasma membrane"/>
    <property type="evidence" value="ECO:0007669"/>
    <property type="project" value="UniProtKB-SubCell"/>
</dbReference>
<dbReference type="GO" id="GO:0045259">
    <property type="term" value="C:proton-transporting ATP synthase complex"/>
    <property type="evidence" value="ECO:0007669"/>
    <property type="project" value="UniProtKB-KW"/>
</dbReference>
<dbReference type="GO" id="GO:0005524">
    <property type="term" value="F:ATP binding"/>
    <property type="evidence" value="ECO:0007669"/>
    <property type="project" value="UniProtKB-UniRule"/>
</dbReference>
<dbReference type="GO" id="GO:0016887">
    <property type="term" value="F:ATP hydrolysis activity"/>
    <property type="evidence" value="ECO:0007669"/>
    <property type="project" value="InterPro"/>
</dbReference>
<dbReference type="GO" id="GO:0046933">
    <property type="term" value="F:proton-transporting ATP synthase activity, rotational mechanism"/>
    <property type="evidence" value="ECO:0007669"/>
    <property type="project" value="UniProtKB-UniRule"/>
</dbReference>
<dbReference type="GO" id="GO:0046962">
    <property type="term" value="F:sodium-transporting ATPase activity, rotational mechanism"/>
    <property type="evidence" value="ECO:0007669"/>
    <property type="project" value="UniProtKB-EC"/>
</dbReference>
<dbReference type="CDD" id="cd18110">
    <property type="entry name" value="ATP-synt_F1_beta_C"/>
    <property type="match status" value="1"/>
</dbReference>
<dbReference type="CDD" id="cd18115">
    <property type="entry name" value="ATP-synt_F1_beta_N"/>
    <property type="match status" value="1"/>
</dbReference>
<dbReference type="CDD" id="cd01133">
    <property type="entry name" value="F1-ATPase_beta_CD"/>
    <property type="match status" value="1"/>
</dbReference>
<dbReference type="FunFam" id="1.10.1140.10:FF:000001">
    <property type="entry name" value="ATP synthase subunit beta"/>
    <property type="match status" value="1"/>
</dbReference>
<dbReference type="FunFam" id="2.40.10.170:FF:000005">
    <property type="entry name" value="ATP synthase subunit beta"/>
    <property type="match status" value="1"/>
</dbReference>
<dbReference type="FunFam" id="3.40.50.300:FF:000026">
    <property type="entry name" value="ATP synthase subunit beta"/>
    <property type="match status" value="1"/>
</dbReference>
<dbReference type="Gene3D" id="2.40.10.170">
    <property type="match status" value="1"/>
</dbReference>
<dbReference type="Gene3D" id="1.10.1140.10">
    <property type="entry name" value="Bovine Mitochondrial F1-atpase, Atp Synthase Beta Chain, Chain D, domain 3"/>
    <property type="match status" value="1"/>
</dbReference>
<dbReference type="Gene3D" id="3.40.50.300">
    <property type="entry name" value="P-loop containing nucleotide triphosphate hydrolases"/>
    <property type="match status" value="1"/>
</dbReference>
<dbReference type="HAMAP" id="MF_01347">
    <property type="entry name" value="ATP_synth_beta_bact"/>
    <property type="match status" value="1"/>
</dbReference>
<dbReference type="InterPro" id="IPR003593">
    <property type="entry name" value="AAA+_ATPase"/>
</dbReference>
<dbReference type="InterPro" id="IPR055190">
    <property type="entry name" value="ATP-synt_VA_C"/>
</dbReference>
<dbReference type="InterPro" id="IPR005722">
    <property type="entry name" value="ATP_synth_F1_bsu"/>
</dbReference>
<dbReference type="InterPro" id="IPR020003">
    <property type="entry name" value="ATPase_a/bsu_AS"/>
</dbReference>
<dbReference type="InterPro" id="IPR050053">
    <property type="entry name" value="ATPase_alpha/beta_chains"/>
</dbReference>
<dbReference type="InterPro" id="IPR004100">
    <property type="entry name" value="ATPase_F1/V1/A1_a/bsu_N"/>
</dbReference>
<dbReference type="InterPro" id="IPR036121">
    <property type="entry name" value="ATPase_F1/V1/A1_a/bsu_N_sf"/>
</dbReference>
<dbReference type="InterPro" id="IPR000194">
    <property type="entry name" value="ATPase_F1/V1/A1_a/bsu_nucl-bd"/>
</dbReference>
<dbReference type="InterPro" id="IPR024034">
    <property type="entry name" value="ATPase_F1/V1_b/a_C"/>
</dbReference>
<dbReference type="InterPro" id="IPR027417">
    <property type="entry name" value="P-loop_NTPase"/>
</dbReference>
<dbReference type="NCBIfam" id="TIGR01039">
    <property type="entry name" value="atpD"/>
    <property type="match status" value="1"/>
</dbReference>
<dbReference type="PANTHER" id="PTHR15184">
    <property type="entry name" value="ATP SYNTHASE"/>
    <property type="match status" value="1"/>
</dbReference>
<dbReference type="PANTHER" id="PTHR15184:SF71">
    <property type="entry name" value="ATP SYNTHASE SUBUNIT BETA, MITOCHONDRIAL"/>
    <property type="match status" value="1"/>
</dbReference>
<dbReference type="Pfam" id="PF00006">
    <property type="entry name" value="ATP-synt_ab"/>
    <property type="match status" value="1"/>
</dbReference>
<dbReference type="Pfam" id="PF02874">
    <property type="entry name" value="ATP-synt_ab_N"/>
    <property type="match status" value="1"/>
</dbReference>
<dbReference type="Pfam" id="PF22919">
    <property type="entry name" value="ATP-synt_VA_C"/>
    <property type="match status" value="1"/>
</dbReference>
<dbReference type="PIRSF" id="PIRSF039072">
    <property type="entry name" value="ATPase_subunit_beta"/>
    <property type="match status" value="1"/>
</dbReference>
<dbReference type="SMART" id="SM00382">
    <property type="entry name" value="AAA"/>
    <property type="match status" value="1"/>
</dbReference>
<dbReference type="SUPFAM" id="SSF47917">
    <property type="entry name" value="C-terminal domain of alpha and beta subunits of F1 ATP synthase"/>
    <property type="match status" value="1"/>
</dbReference>
<dbReference type="SUPFAM" id="SSF50615">
    <property type="entry name" value="N-terminal domain of alpha and beta subunits of F1 ATP synthase"/>
    <property type="match status" value="1"/>
</dbReference>
<dbReference type="SUPFAM" id="SSF52540">
    <property type="entry name" value="P-loop containing nucleoside triphosphate hydrolases"/>
    <property type="match status" value="1"/>
</dbReference>
<dbReference type="PROSITE" id="PS00152">
    <property type="entry name" value="ATPASE_ALPHA_BETA"/>
    <property type="match status" value="1"/>
</dbReference>
<gene>
    <name evidence="1" type="primary">atpD</name>
    <name type="synonym">uncD</name>
</gene>
<organism>
    <name type="scientific">Propionigenium modestum</name>
    <dbReference type="NCBI Taxonomy" id="2333"/>
    <lineage>
        <taxon>Bacteria</taxon>
        <taxon>Fusobacteriati</taxon>
        <taxon>Fusobacteriota</taxon>
        <taxon>Fusobacteriia</taxon>
        <taxon>Fusobacteriales</taxon>
        <taxon>Fusobacteriaceae</taxon>
        <taxon>Propionigenium</taxon>
    </lineage>
</organism>